<evidence type="ECO:0000250" key="1"/>
<evidence type="ECO:0000256" key="2">
    <source>
        <dbReference type="SAM" id="MobiDB-lite"/>
    </source>
</evidence>
<evidence type="ECO:0000305" key="3"/>
<protein>
    <recommendedName>
        <fullName>Dual specificity protein phosphatase VP2</fullName>
        <ecNumber>3.1.3.16</ecNumber>
        <ecNumber>3.1.3.48</ecNumber>
    </recommendedName>
</protein>
<comment type="function">
    <text evidence="1">May act as a scaffold protein in virion assembly. May also play a role in intracellular signaling during viral replication (By similarity).</text>
</comment>
<comment type="catalytic activity">
    <reaction>
        <text>O-phospho-L-tyrosyl-[protein] + H2O = L-tyrosyl-[protein] + phosphate</text>
        <dbReference type="Rhea" id="RHEA:10684"/>
        <dbReference type="Rhea" id="RHEA-COMP:10136"/>
        <dbReference type="Rhea" id="RHEA-COMP:20101"/>
        <dbReference type="ChEBI" id="CHEBI:15377"/>
        <dbReference type="ChEBI" id="CHEBI:43474"/>
        <dbReference type="ChEBI" id="CHEBI:46858"/>
        <dbReference type="ChEBI" id="CHEBI:61978"/>
        <dbReference type="EC" id="3.1.3.48"/>
    </reaction>
</comment>
<comment type="catalytic activity">
    <reaction>
        <text>O-phospho-L-seryl-[protein] + H2O = L-seryl-[protein] + phosphate</text>
        <dbReference type="Rhea" id="RHEA:20629"/>
        <dbReference type="Rhea" id="RHEA-COMP:9863"/>
        <dbReference type="Rhea" id="RHEA-COMP:11604"/>
        <dbReference type="ChEBI" id="CHEBI:15377"/>
        <dbReference type="ChEBI" id="CHEBI:29999"/>
        <dbReference type="ChEBI" id="CHEBI:43474"/>
        <dbReference type="ChEBI" id="CHEBI:83421"/>
        <dbReference type="EC" id="3.1.3.16"/>
    </reaction>
</comment>
<comment type="catalytic activity">
    <reaction>
        <text>O-phospho-L-threonyl-[protein] + H2O = L-threonyl-[protein] + phosphate</text>
        <dbReference type="Rhea" id="RHEA:47004"/>
        <dbReference type="Rhea" id="RHEA-COMP:11060"/>
        <dbReference type="Rhea" id="RHEA-COMP:11605"/>
        <dbReference type="ChEBI" id="CHEBI:15377"/>
        <dbReference type="ChEBI" id="CHEBI:30013"/>
        <dbReference type="ChEBI" id="CHEBI:43474"/>
        <dbReference type="ChEBI" id="CHEBI:61977"/>
        <dbReference type="EC" id="3.1.3.16"/>
    </reaction>
</comment>
<comment type="induction">
    <text>VP1 and VP2 are detected 12 hours post infection, while VP3 only after 24 hours.</text>
</comment>
<comment type="similarity">
    <text evidence="3">Belongs to the gyrovirus protein VP2 family.</text>
</comment>
<gene>
    <name type="primary">VP2</name>
</gene>
<keyword id="KW-0244">Early protein</keyword>
<keyword id="KW-0378">Hydrolase</keyword>
<keyword id="KW-0904">Protein phosphatase</keyword>
<reference key="1">
    <citation type="journal article" date="1991" name="J. Gen. Virol.">
        <title>Molecular cloning and sequence analysis of the genome of chicken anaemia agent.</title>
        <authorList>
            <person name="Claessens J.A.J."/>
            <person name="Schrier C.C."/>
            <person name="Mockett A.P.A."/>
            <person name="Jagt E.H.J.M."/>
            <person name="Sondermeijer P.J.A."/>
        </authorList>
    </citation>
    <scope>NUCLEOTIDE SEQUENCE [GENOMIC DNA]</scope>
</reference>
<name>VP2_CAV26</name>
<accession>P54092</accession>
<organismHost>
    <name type="scientific">Gallus gallus</name>
    <name type="common">Chicken</name>
    <dbReference type="NCBI Taxonomy" id="9031"/>
</organismHost>
<organism>
    <name type="scientific">Chicken anemia virus (isolate USA 26p4)</name>
    <name type="common">CAV</name>
    <dbReference type="NCBI Taxonomy" id="73477"/>
    <lineage>
        <taxon>Viruses</taxon>
        <taxon>Viruses incertae sedis</taxon>
        <taxon>Anelloviridae</taxon>
        <taxon>Gyrovirus</taxon>
        <taxon>Gyrovirus chickenanemia</taxon>
    </lineage>
</organism>
<dbReference type="EC" id="3.1.3.16"/>
<dbReference type="EC" id="3.1.3.48"/>
<dbReference type="EMBL" id="D10068">
    <property type="protein sequence ID" value="BAA00959.1"/>
    <property type="molecule type" value="Genomic_DNA"/>
</dbReference>
<dbReference type="SMR" id="P54092"/>
<dbReference type="Proteomes" id="UP000008442">
    <property type="component" value="Genome"/>
</dbReference>
<dbReference type="GO" id="GO:0004722">
    <property type="term" value="F:protein serine/threonine phosphatase activity"/>
    <property type="evidence" value="ECO:0007669"/>
    <property type="project" value="UniProtKB-EC"/>
</dbReference>
<dbReference type="GO" id="GO:0004725">
    <property type="term" value="F:protein tyrosine phosphatase activity"/>
    <property type="evidence" value="ECO:0007669"/>
    <property type="project" value="UniProtKB-EC"/>
</dbReference>
<dbReference type="InterPro" id="IPR004118">
    <property type="entry name" value="HEV_TT_vir_Orf2/Gyrovir_Vp2_N"/>
</dbReference>
<dbReference type="Pfam" id="PF02957">
    <property type="entry name" value="TT_ORF2-like"/>
    <property type="match status" value="1"/>
</dbReference>
<sequence length="216" mass="24067">MHGNGGQPAAGGSESALSREGQPGPSGAAQGQVISNERSPRRYSTRTINGVQATNKFTAVGNPSLQRDPDWYRWNYNHSIAVWLRECSRSHAKICNCGQFRKHWFQECAGLEDRSTQASLEEAILRPLRVQGKRAKRKLDYHYSQPTPNRKKVYKTVRWQDELADREADFTPSEEDGGTTSSDFDGDINFDIGGDSGIVDELLGRPFTTPAPVRIV</sequence>
<feature type="chain" id="PRO_0000223002" description="Dual specificity protein phosphatase VP2">
    <location>
        <begin position="1"/>
        <end position="216"/>
    </location>
</feature>
<feature type="region of interest" description="Disordered" evidence="2">
    <location>
        <begin position="1"/>
        <end position="50"/>
    </location>
</feature>
<feature type="region of interest" description="Disordered" evidence="2">
    <location>
        <begin position="165"/>
        <end position="187"/>
    </location>
</feature>
<feature type="compositionally biased region" description="Low complexity" evidence="2">
    <location>
        <begin position="21"/>
        <end position="32"/>
    </location>
</feature>
<feature type="compositionally biased region" description="Low complexity" evidence="2">
    <location>
        <begin position="178"/>
        <end position="187"/>
    </location>
</feature>
<feature type="active site" description="Phosphocysteine intermediate" evidence="1">
    <location>
        <position position="95"/>
    </location>
</feature>
<proteinExistence type="evidence at transcript level"/>